<protein>
    <recommendedName>
        <fullName>Cytochrome b</fullName>
    </recommendedName>
    <alternativeName>
        <fullName>Complex III subunit 3</fullName>
    </alternativeName>
    <alternativeName>
        <fullName>Complex III subunit III</fullName>
    </alternativeName>
    <alternativeName>
        <fullName>Cytochrome b-c1 complex subunit 3</fullName>
    </alternativeName>
    <alternativeName>
        <fullName>Ubiquinol-cytochrome-c reductase complex cytochrome b subunit</fullName>
    </alternativeName>
</protein>
<sequence>MTNTRKTHPLIKIINHSFIDLPAPSNISAWWNFGSLLGLCLIIQILTGLFLAMHYTSDTMTAFSSVTHICRDVNYGWLIRYMHANGASMFFICLFLHVGRGLYYGSYTYFETWNIGVILLFTVMATAFMGYVLPWGQMSFWGATVITNLLSAIPYIGTTLVEWIWGGFSVDKATLTRFFAFHFILPFVIAALVMVHLLFLHETGSNNPSGLNSDSDKIPFHPYYTIKDILGVLLLVLTLMILVLFSPDLLGDPDNYTPANPLSTPPHIKPEWYFLFAYAILRSIPNKLGGVLALIFSILILMLFPLLHLSKQRSMMFRPLSQCVFWILVADLLTLTWIGGQPVEHPFIIIGQLASILYFAIILLILPTVSMIENKLLKW</sequence>
<comment type="function">
    <text evidence="2">Component of the ubiquinol-cytochrome c reductase complex (complex III or cytochrome b-c1 complex) that is part of the mitochondrial respiratory chain. The b-c1 complex mediates electron transfer from ubiquinol to cytochrome c. Contributes to the generation of a proton gradient across the mitochondrial membrane that is then used for ATP synthesis.</text>
</comment>
<comment type="cofactor">
    <cofactor evidence="2">
        <name>heme b</name>
        <dbReference type="ChEBI" id="CHEBI:60344"/>
    </cofactor>
    <text evidence="2">Binds 2 heme b groups non-covalently.</text>
</comment>
<comment type="subunit">
    <text evidence="2">The cytochrome bc1 complex contains 11 subunits: 3 respiratory subunits (MT-CYB, CYC1 and UQCRFS1), 2 core proteins (UQCRC1 and UQCRC2) and 6 low-molecular weight proteins (UQCRH/QCR6, UQCRB/QCR7, UQCRQ/QCR8, UQCR10/QCR9, UQCR11/QCR10 and a cleavage product of UQCRFS1). This cytochrome bc1 complex then forms a dimer.</text>
</comment>
<comment type="subcellular location">
    <subcellularLocation>
        <location evidence="2">Mitochondrion inner membrane</location>
        <topology evidence="2">Multi-pass membrane protein</topology>
    </subcellularLocation>
</comment>
<comment type="miscellaneous">
    <text evidence="1">Heme 1 (or BL or b562) is low-potential and absorbs at about 562 nm, and heme 2 (or BH or b566) is high-potential and absorbs at about 566 nm.</text>
</comment>
<comment type="similarity">
    <text evidence="3 4">Belongs to the cytochrome b family.</text>
</comment>
<comment type="caution">
    <text evidence="2">The full-length protein contains only eight transmembrane helices, not nine as predicted by bioinformatics tools.</text>
</comment>
<organism>
    <name type="scientific">Spermophilus pygmaeus</name>
    <name type="common">Little ground squirrel</name>
    <name type="synonym">Citellus pygmaeus</name>
    <dbReference type="NCBI Taxonomy" id="99855"/>
    <lineage>
        <taxon>Eukaryota</taxon>
        <taxon>Metazoa</taxon>
        <taxon>Chordata</taxon>
        <taxon>Craniata</taxon>
        <taxon>Vertebrata</taxon>
        <taxon>Euteleostomi</taxon>
        <taxon>Mammalia</taxon>
        <taxon>Eutheria</taxon>
        <taxon>Euarchontoglires</taxon>
        <taxon>Glires</taxon>
        <taxon>Rodentia</taxon>
        <taxon>Sciuromorpha</taxon>
        <taxon>Sciuridae</taxon>
        <taxon>Xerinae</taxon>
        <taxon>Marmotini</taxon>
        <taxon>Spermophilus</taxon>
    </lineage>
</organism>
<reference key="1">
    <citation type="journal article" date="2003" name="J. Mammal. Evol.">
        <title>Phylogeny and evolutionary history of the ground squirrels (Rodentia: Marmotinae).</title>
        <authorList>
            <person name="Harrison R.G."/>
            <person name="Bogdanowicz S.M."/>
            <person name="Hoffmann R.S."/>
            <person name="Yensen E."/>
            <person name="Sherman P.W."/>
        </authorList>
    </citation>
    <scope>NUCLEOTIDE SEQUENCE [GENOMIC DNA]</scope>
    <source>
        <strain>Isolate S56</strain>
        <strain>Isolate S59</strain>
    </source>
</reference>
<feature type="chain" id="PRO_0000255140" description="Cytochrome b">
    <location>
        <begin position="1"/>
        <end position="379"/>
    </location>
</feature>
<feature type="transmembrane region" description="Helical" evidence="2">
    <location>
        <begin position="33"/>
        <end position="53"/>
    </location>
</feature>
<feature type="transmembrane region" description="Helical" evidence="2">
    <location>
        <begin position="77"/>
        <end position="98"/>
    </location>
</feature>
<feature type="transmembrane region" description="Helical" evidence="2">
    <location>
        <begin position="113"/>
        <end position="133"/>
    </location>
</feature>
<feature type="transmembrane region" description="Helical" evidence="2">
    <location>
        <begin position="178"/>
        <end position="198"/>
    </location>
</feature>
<feature type="transmembrane region" description="Helical" evidence="2">
    <location>
        <begin position="226"/>
        <end position="246"/>
    </location>
</feature>
<feature type="transmembrane region" description="Helical" evidence="2">
    <location>
        <begin position="288"/>
        <end position="308"/>
    </location>
</feature>
<feature type="transmembrane region" description="Helical" evidence="2">
    <location>
        <begin position="320"/>
        <end position="340"/>
    </location>
</feature>
<feature type="transmembrane region" description="Helical" evidence="2">
    <location>
        <begin position="347"/>
        <end position="367"/>
    </location>
</feature>
<feature type="binding site" description="axial binding residue" evidence="2">
    <location>
        <position position="83"/>
    </location>
    <ligand>
        <name>heme b</name>
        <dbReference type="ChEBI" id="CHEBI:60344"/>
        <label>b562</label>
    </ligand>
    <ligandPart>
        <name>Fe</name>
        <dbReference type="ChEBI" id="CHEBI:18248"/>
    </ligandPart>
</feature>
<feature type="binding site" description="axial binding residue" evidence="2">
    <location>
        <position position="97"/>
    </location>
    <ligand>
        <name>heme b</name>
        <dbReference type="ChEBI" id="CHEBI:60344"/>
        <label>b566</label>
    </ligand>
    <ligandPart>
        <name>Fe</name>
        <dbReference type="ChEBI" id="CHEBI:18248"/>
    </ligandPart>
</feature>
<feature type="binding site" description="axial binding residue" evidence="2">
    <location>
        <position position="182"/>
    </location>
    <ligand>
        <name>heme b</name>
        <dbReference type="ChEBI" id="CHEBI:60344"/>
        <label>b562</label>
    </ligand>
    <ligandPart>
        <name>Fe</name>
        <dbReference type="ChEBI" id="CHEBI:18248"/>
    </ligandPart>
</feature>
<feature type="binding site" description="axial binding residue" evidence="2">
    <location>
        <position position="196"/>
    </location>
    <ligand>
        <name>heme b</name>
        <dbReference type="ChEBI" id="CHEBI:60344"/>
        <label>b566</label>
    </ligand>
    <ligandPart>
        <name>Fe</name>
        <dbReference type="ChEBI" id="CHEBI:18248"/>
    </ligandPart>
</feature>
<feature type="binding site" evidence="2">
    <location>
        <position position="201"/>
    </location>
    <ligand>
        <name>a ubiquinone</name>
        <dbReference type="ChEBI" id="CHEBI:16389"/>
    </ligand>
</feature>
<feature type="sequence variant" description="In strain: Isolate S59.">
    <original>N</original>
    <variation>I</variation>
    <location>
        <position position="212"/>
    </location>
</feature>
<feature type="sequence variant" description="In strain: Isolate S59.">
    <original>D</original>
    <variation>E</variation>
    <location>
        <position position="252"/>
    </location>
</feature>
<feature type="sequence variant" description="In strain: Isolate S59.">
    <original>L</original>
    <variation>F</variation>
    <location>
        <position position="333"/>
    </location>
</feature>
<gene>
    <name type="primary">MT-CYB</name>
    <name type="synonym">COB</name>
    <name type="synonym">CYTB</name>
    <name type="synonym">MTCYB</name>
</gene>
<dbReference type="EMBL" id="AF157907">
    <property type="protein sequence ID" value="AAD50191.1"/>
    <property type="molecule type" value="Genomic_DNA"/>
</dbReference>
<dbReference type="EMBL" id="AF157910">
    <property type="protein sequence ID" value="AAD50194.1"/>
    <property type="molecule type" value="Genomic_DNA"/>
</dbReference>
<dbReference type="SMR" id="Q9TF46"/>
<dbReference type="GO" id="GO:0005743">
    <property type="term" value="C:mitochondrial inner membrane"/>
    <property type="evidence" value="ECO:0007669"/>
    <property type="project" value="UniProtKB-SubCell"/>
</dbReference>
<dbReference type="GO" id="GO:0045275">
    <property type="term" value="C:respiratory chain complex III"/>
    <property type="evidence" value="ECO:0007669"/>
    <property type="project" value="InterPro"/>
</dbReference>
<dbReference type="GO" id="GO:0046872">
    <property type="term" value="F:metal ion binding"/>
    <property type="evidence" value="ECO:0007669"/>
    <property type="project" value="UniProtKB-KW"/>
</dbReference>
<dbReference type="GO" id="GO:0008121">
    <property type="term" value="F:ubiquinol-cytochrome-c reductase activity"/>
    <property type="evidence" value="ECO:0007669"/>
    <property type="project" value="InterPro"/>
</dbReference>
<dbReference type="GO" id="GO:0006122">
    <property type="term" value="P:mitochondrial electron transport, ubiquinol to cytochrome c"/>
    <property type="evidence" value="ECO:0007669"/>
    <property type="project" value="TreeGrafter"/>
</dbReference>
<dbReference type="CDD" id="cd00290">
    <property type="entry name" value="cytochrome_b_C"/>
    <property type="match status" value="1"/>
</dbReference>
<dbReference type="CDD" id="cd00284">
    <property type="entry name" value="Cytochrome_b_N"/>
    <property type="match status" value="1"/>
</dbReference>
<dbReference type="FunFam" id="1.20.810.10:FF:000002">
    <property type="entry name" value="Cytochrome b"/>
    <property type="match status" value="1"/>
</dbReference>
<dbReference type="Gene3D" id="1.20.810.10">
    <property type="entry name" value="Cytochrome Bc1 Complex, Chain C"/>
    <property type="match status" value="1"/>
</dbReference>
<dbReference type="InterPro" id="IPR005798">
    <property type="entry name" value="Cyt_b/b6_C"/>
</dbReference>
<dbReference type="InterPro" id="IPR036150">
    <property type="entry name" value="Cyt_b/b6_C_sf"/>
</dbReference>
<dbReference type="InterPro" id="IPR005797">
    <property type="entry name" value="Cyt_b/b6_N"/>
</dbReference>
<dbReference type="InterPro" id="IPR027387">
    <property type="entry name" value="Cytb/b6-like_sf"/>
</dbReference>
<dbReference type="InterPro" id="IPR030689">
    <property type="entry name" value="Cytochrome_b"/>
</dbReference>
<dbReference type="InterPro" id="IPR048260">
    <property type="entry name" value="Cytochrome_b_C_euk/bac"/>
</dbReference>
<dbReference type="InterPro" id="IPR048259">
    <property type="entry name" value="Cytochrome_b_N_euk/bac"/>
</dbReference>
<dbReference type="InterPro" id="IPR016174">
    <property type="entry name" value="Di-haem_cyt_TM"/>
</dbReference>
<dbReference type="PANTHER" id="PTHR19271">
    <property type="entry name" value="CYTOCHROME B"/>
    <property type="match status" value="1"/>
</dbReference>
<dbReference type="PANTHER" id="PTHR19271:SF16">
    <property type="entry name" value="CYTOCHROME B"/>
    <property type="match status" value="1"/>
</dbReference>
<dbReference type="Pfam" id="PF00032">
    <property type="entry name" value="Cytochrom_B_C"/>
    <property type="match status" value="1"/>
</dbReference>
<dbReference type="Pfam" id="PF00033">
    <property type="entry name" value="Cytochrome_B"/>
    <property type="match status" value="1"/>
</dbReference>
<dbReference type="PIRSF" id="PIRSF038885">
    <property type="entry name" value="COB"/>
    <property type="match status" value="1"/>
</dbReference>
<dbReference type="SUPFAM" id="SSF81648">
    <property type="entry name" value="a domain/subunit of cytochrome bc1 complex (Ubiquinol-cytochrome c reductase)"/>
    <property type="match status" value="1"/>
</dbReference>
<dbReference type="SUPFAM" id="SSF81342">
    <property type="entry name" value="Transmembrane di-heme cytochromes"/>
    <property type="match status" value="1"/>
</dbReference>
<dbReference type="PROSITE" id="PS51003">
    <property type="entry name" value="CYTB_CTER"/>
    <property type="match status" value="1"/>
</dbReference>
<dbReference type="PROSITE" id="PS51002">
    <property type="entry name" value="CYTB_NTER"/>
    <property type="match status" value="1"/>
</dbReference>
<geneLocation type="mitochondrion"/>
<evidence type="ECO:0000250" key="1"/>
<evidence type="ECO:0000250" key="2">
    <source>
        <dbReference type="UniProtKB" id="P00157"/>
    </source>
</evidence>
<evidence type="ECO:0000255" key="3">
    <source>
        <dbReference type="PROSITE-ProRule" id="PRU00967"/>
    </source>
</evidence>
<evidence type="ECO:0000255" key="4">
    <source>
        <dbReference type="PROSITE-ProRule" id="PRU00968"/>
    </source>
</evidence>
<name>CYB_SPEPY</name>
<keyword id="KW-0249">Electron transport</keyword>
<keyword id="KW-0349">Heme</keyword>
<keyword id="KW-0408">Iron</keyword>
<keyword id="KW-0472">Membrane</keyword>
<keyword id="KW-0479">Metal-binding</keyword>
<keyword id="KW-0496">Mitochondrion</keyword>
<keyword id="KW-0999">Mitochondrion inner membrane</keyword>
<keyword id="KW-0679">Respiratory chain</keyword>
<keyword id="KW-0812">Transmembrane</keyword>
<keyword id="KW-1133">Transmembrane helix</keyword>
<keyword id="KW-0813">Transport</keyword>
<keyword id="KW-0830">Ubiquinone</keyword>
<proteinExistence type="inferred from homology"/>
<accession>Q9TF46</accession>
<accession>Q9TF43</accession>